<sequence length="111" mass="12511">MSQFEKQKEQGNSLFKQGLYREAVHCYDQLITAQPQNPVGYSNKAMALIKLGEYTQAIQMCQQGLRYTSTAEHVAIRSKLQYRLELAQGAVGSVQIPVVEVDELPEGYDRS</sequence>
<name>TAH1_YEAST</name>
<gene>
    <name type="primary">TAH1</name>
    <name type="ordered locus">YCR060W</name>
    <name type="ORF">YCR60W</name>
</gene>
<comment type="subunit">
    <text evidence="3">Component of the R2TP complex composed at least of RVB1, RVB2, TAH1 and PIH1. Also interacts with HSP90.</text>
</comment>
<comment type="interaction">
    <interactant intactId="EBI-21956">
        <id>P25638</id>
    </interactant>
    <interactant intactId="EBI-8659">
        <id>P02829</id>
        <label>HSP82</label>
    </interactant>
    <organismsDiffer>false</organismsDiffer>
    <experiments>10</experiments>
</comment>
<comment type="interaction">
    <interactant intactId="EBI-21956">
        <id>P25638</id>
    </interactant>
    <interactant intactId="EBI-24499">
        <id>P38768</id>
        <label>PIH1</label>
    </interactant>
    <organismsDiffer>false</organismsDiffer>
    <experiments>18</experiments>
</comment>
<comment type="subcellular location">
    <subcellularLocation>
        <location evidence="1">Cytoplasm</location>
    </subcellularLocation>
    <subcellularLocation>
        <location evidence="1">Nucleus</location>
    </subcellularLocation>
</comment>
<comment type="miscellaneous">
    <text evidence="2">Present with 1660 molecules/cell in log phase SD medium.</text>
</comment>
<organism>
    <name type="scientific">Saccharomyces cerevisiae (strain ATCC 204508 / S288c)</name>
    <name type="common">Baker's yeast</name>
    <dbReference type="NCBI Taxonomy" id="559292"/>
    <lineage>
        <taxon>Eukaryota</taxon>
        <taxon>Fungi</taxon>
        <taxon>Dikarya</taxon>
        <taxon>Ascomycota</taxon>
        <taxon>Saccharomycotina</taxon>
        <taxon>Saccharomycetes</taxon>
        <taxon>Saccharomycetales</taxon>
        <taxon>Saccharomycetaceae</taxon>
        <taxon>Saccharomyces</taxon>
    </lineage>
</organism>
<protein>
    <recommendedName>
        <fullName>TPR repeat-containing protein associated with Hsp90</fullName>
    </recommendedName>
</protein>
<evidence type="ECO:0000269" key="1">
    <source>
    </source>
</evidence>
<evidence type="ECO:0000269" key="2">
    <source>
    </source>
</evidence>
<evidence type="ECO:0000269" key="3">
    <source>
    </source>
</evidence>
<evidence type="ECO:0007744" key="4">
    <source>
    </source>
</evidence>
<evidence type="ECO:0007829" key="5">
    <source>
        <dbReference type="PDB" id="2L6J"/>
    </source>
</evidence>
<evidence type="ECO:0007829" key="6">
    <source>
        <dbReference type="PDB" id="4CGQ"/>
    </source>
</evidence>
<evidence type="ECO:0007829" key="7">
    <source>
        <dbReference type="PDB" id="4CGU"/>
    </source>
</evidence>
<feature type="initiator methionine" description="Removed" evidence="4">
    <location>
        <position position="1"/>
    </location>
</feature>
<feature type="chain" id="PRO_0000106352" description="TPR repeat-containing protein associated with Hsp90">
    <location>
        <begin position="2"/>
        <end position="111"/>
    </location>
</feature>
<feature type="repeat" description="TPR 1">
    <location>
        <begin position="4"/>
        <end position="37"/>
    </location>
</feature>
<feature type="repeat" description="TPR 2">
    <location>
        <begin position="39"/>
        <end position="71"/>
    </location>
</feature>
<feature type="modified residue" description="N-acetylserine" evidence="4">
    <location>
        <position position="2"/>
    </location>
</feature>
<feature type="helix" evidence="6">
    <location>
        <begin position="3"/>
        <end position="16"/>
    </location>
</feature>
<feature type="helix" evidence="6">
    <location>
        <begin position="20"/>
        <end position="33"/>
    </location>
</feature>
<feature type="helix" evidence="6">
    <location>
        <begin position="38"/>
        <end position="50"/>
    </location>
</feature>
<feature type="helix" evidence="6">
    <location>
        <begin position="54"/>
        <end position="65"/>
    </location>
</feature>
<feature type="helix" evidence="7">
    <location>
        <begin position="71"/>
        <end position="73"/>
    </location>
</feature>
<feature type="helix" evidence="6">
    <location>
        <begin position="76"/>
        <end position="90"/>
    </location>
</feature>
<feature type="strand" evidence="7">
    <location>
        <begin position="92"/>
        <end position="95"/>
    </location>
</feature>
<feature type="strand" evidence="7">
    <location>
        <begin position="98"/>
        <end position="100"/>
    </location>
</feature>
<feature type="strand" evidence="5">
    <location>
        <begin position="105"/>
        <end position="109"/>
    </location>
</feature>
<dbReference type="EMBL" id="X59720">
    <property type="protein sequence ID" value="CAA42288.1"/>
    <property type="molecule type" value="Genomic_DNA"/>
</dbReference>
<dbReference type="EMBL" id="AY558151">
    <property type="protein sequence ID" value="AAS56477.1"/>
    <property type="molecule type" value="Genomic_DNA"/>
</dbReference>
<dbReference type="EMBL" id="BK006937">
    <property type="protein sequence ID" value="DAA07534.1"/>
    <property type="molecule type" value="Genomic_DNA"/>
</dbReference>
<dbReference type="PIR" id="S19475">
    <property type="entry name" value="S19475"/>
</dbReference>
<dbReference type="RefSeq" id="NP_009986.1">
    <property type="nucleotide sequence ID" value="NM_001178771.1"/>
</dbReference>
<dbReference type="PDB" id="2L6J">
    <property type="method" value="NMR"/>
    <property type="chains" value="A=1-111"/>
</dbReference>
<dbReference type="PDB" id="2LSU">
    <property type="method" value="NMR"/>
    <property type="chains" value="A=2-111"/>
</dbReference>
<dbReference type="PDB" id="2LSV">
    <property type="method" value="NMR"/>
    <property type="chains" value="A=2-111"/>
</dbReference>
<dbReference type="PDB" id="2MNJ">
    <property type="method" value="NMR"/>
    <property type="chains" value="A=93-111"/>
</dbReference>
<dbReference type="PDB" id="4CGQ">
    <property type="method" value="X-ray"/>
    <property type="resolution" value="2.00 A"/>
    <property type="chains" value="A=1-111"/>
</dbReference>
<dbReference type="PDB" id="4CGU">
    <property type="method" value="X-ray"/>
    <property type="resolution" value="2.11 A"/>
    <property type="chains" value="A=1-111"/>
</dbReference>
<dbReference type="PDBsum" id="2L6J"/>
<dbReference type="PDBsum" id="2LSU"/>
<dbReference type="PDBsum" id="2LSV"/>
<dbReference type="PDBsum" id="2MNJ"/>
<dbReference type="PDBsum" id="4CGQ"/>
<dbReference type="PDBsum" id="4CGU"/>
<dbReference type="BMRB" id="P25638"/>
<dbReference type="SMR" id="P25638"/>
<dbReference type="BioGRID" id="31037">
    <property type="interactions" value="146"/>
</dbReference>
<dbReference type="ComplexPortal" id="CPX-1814">
    <property type="entry name" value="R2TP co-chaperone complex"/>
</dbReference>
<dbReference type="DIP" id="DIP-5000N"/>
<dbReference type="FunCoup" id="P25638">
    <property type="interactions" value="117"/>
</dbReference>
<dbReference type="IntAct" id="P25638">
    <property type="interactions" value="7"/>
</dbReference>
<dbReference type="MINT" id="P25638"/>
<dbReference type="STRING" id="4932.YCR060W"/>
<dbReference type="iPTMnet" id="P25638"/>
<dbReference type="PaxDb" id="4932-YCR060W"/>
<dbReference type="PeptideAtlas" id="P25638"/>
<dbReference type="EnsemblFungi" id="YCR060W_mRNA">
    <property type="protein sequence ID" value="YCR060W"/>
    <property type="gene ID" value="YCR060W"/>
</dbReference>
<dbReference type="GeneID" id="850424"/>
<dbReference type="KEGG" id="sce:YCR060W"/>
<dbReference type="AGR" id="SGD:S000000656"/>
<dbReference type="SGD" id="S000000656">
    <property type="gene designation" value="TAH1"/>
</dbReference>
<dbReference type="VEuPathDB" id="FungiDB:YCR060W"/>
<dbReference type="eggNOG" id="KOG1124">
    <property type="taxonomic scope" value="Eukaryota"/>
</dbReference>
<dbReference type="HOGENOM" id="CLU_132745_0_0_1"/>
<dbReference type="InParanoid" id="P25638"/>
<dbReference type="OMA" id="PIGYSNK"/>
<dbReference type="OrthoDB" id="10250354at2759"/>
<dbReference type="BioCyc" id="YEAST:G3O-29365-MONOMER"/>
<dbReference type="BioGRID-ORCS" id="850424">
    <property type="hits" value="6 hits in 10 CRISPR screens"/>
</dbReference>
<dbReference type="ChiTaRS" id="TAH1">
    <property type="organism name" value="yeast"/>
</dbReference>
<dbReference type="EvolutionaryTrace" id="P25638"/>
<dbReference type="PRO" id="PR:P25638"/>
<dbReference type="Proteomes" id="UP000002311">
    <property type="component" value="Chromosome III"/>
</dbReference>
<dbReference type="RNAct" id="P25638">
    <property type="molecule type" value="protein"/>
</dbReference>
<dbReference type="GO" id="GO:0005737">
    <property type="term" value="C:cytoplasm"/>
    <property type="evidence" value="ECO:0007005"/>
    <property type="project" value="SGD"/>
</dbReference>
<dbReference type="GO" id="GO:0005634">
    <property type="term" value="C:nucleus"/>
    <property type="evidence" value="ECO:0007005"/>
    <property type="project" value="SGD"/>
</dbReference>
<dbReference type="GO" id="GO:0097255">
    <property type="term" value="C:R2TP complex"/>
    <property type="evidence" value="ECO:0000314"/>
    <property type="project" value="SGD"/>
</dbReference>
<dbReference type="GO" id="GO:0051087">
    <property type="term" value="F:protein-folding chaperone binding"/>
    <property type="evidence" value="ECO:0000314"/>
    <property type="project" value="SGD"/>
</dbReference>
<dbReference type="GO" id="GO:0000492">
    <property type="term" value="P:box C/D snoRNP assembly"/>
    <property type="evidence" value="ECO:0000315"/>
    <property type="project" value="SGD"/>
</dbReference>
<dbReference type="GO" id="GO:0006457">
    <property type="term" value="P:protein folding"/>
    <property type="evidence" value="ECO:0000315"/>
    <property type="project" value="SGD"/>
</dbReference>
<dbReference type="GO" id="GO:0050821">
    <property type="term" value="P:protein stabilization"/>
    <property type="evidence" value="ECO:0000303"/>
    <property type="project" value="ComplexPortal"/>
</dbReference>
<dbReference type="DisProt" id="DP01243"/>
<dbReference type="FunFam" id="1.25.40.10:FF:001114">
    <property type="entry name" value="TPR repeat-containing protein associated with Hsp90"/>
    <property type="match status" value="1"/>
</dbReference>
<dbReference type="Gene3D" id="1.25.40.10">
    <property type="entry name" value="Tetratricopeptide repeat domain"/>
    <property type="match status" value="1"/>
</dbReference>
<dbReference type="IDEAL" id="IID50204"/>
<dbReference type="InterPro" id="IPR051966">
    <property type="entry name" value="RPAP3"/>
</dbReference>
<dbReference type="InterPro" id="IPR011990">
    <property type="entry name" value="TPR-like_helical_dom_sf"/>
</dbReference>
<dbReference type="InterPro" id="IPR019734">
    <property type="entry name" value="TPR_rpt"/>
</dbReference>
<dbReference type="PANTHER" id="PTHR46423">
    <property type="entry name" value="RNA POLYMERASE II-ASSOCIATED PROTEIN 3"/>
    <property type="match status" value="1"/>
</dbReference>
<dbReference type="PANTHER" id="PTHR46423:SF1">
    <property type="entry name" value="RNA POLYMERASE II-ASSOCIATED PROTEIN 3"/>
    <property type="match status" value="1"/>
</dbReference>
<dbReference type="Pfam" id="PF14559">
    <property type="entry name" value="TPR_19"/>
    <property type="match status" value="1"/>
</dbReference>
<dbReference type="SMART" id="SM00028">
    <property type="entry name" value="TPR"/>
    <property type="match status" value="2"/>
</dbReference>
<dbReference type="SUPFAM" id="SSF48452">
    <property type="entry name" value="TPR-like"/>
    <property type="match status" value="1"/>
</dbReference>
<dbReference type="PROSITE" id="PS50293">
    <property type="entry name" value="TPR_REGION"/>
    <property type="match status" value="1"/>
</dbReference>
<proteinExistence type="evidence at protein level"/>
<keyword id="KW-0002">3D-structure</keyword>
<keyword id="KW-0007">Acetylation</keyword>
<keyword id="KW-0963">Cytoplasm</keyword>
<keyword id="KW-0539">Nucleus</keyword>
<keyword id="KW-1185">Reference proteome</keyword>
<keyword id="KW-0677">Repeat</keyword>
<keyword id="KW-0802">TPR repeat</keyword>
<accession>P25638</accession>
<accession>D6VR65</accession>
<reference key="1">
    <citation type="journal article" date="1992" name="Nature">
        <title>The complete DNA sequence of yeast chromosome III.</title>
        <authorList>
            <person name="Oliver S.G."/>
            <person name="van der Aart Q.J.M."/>
            <person name="Agostoni-Carbone M.L."/>
            <person name="Aigle M."/>
            <person name="Alberghina L."/>
            <person name="Alexandraki D."/>
            <person name="Antoine G."/>
            <person name="Anwar R."/>
            <person name="Ballesta J.P.G."/>
            <person name="Benit P."/>
            <person name="Berben G."/>
            <person name="Bergantino E."/>
            <person name="Biteau N."/>
            <person name="Bolle P.-A."/>
            <person name="Bolotin-Fukuhara M."/>
            <person name="Brown A."/>
            <person name="Brown A.J.P."/>
            <person name="Buhler J.-M."/>
            <person name="Carcano C."/>
            <person name="Carignani G."/>
            <person name="Cederberg H."/>
            <person name="Chanet R."/>
            <person name="Contreras R."/>
            <person name="Crouzet M."/>
            <person name="Daignan-Fornier B."/>
            <person name="Defoor E."/>
            <person name="Delgado M.D."/>
            <person name="Demolder J."/>
            <person name="Doira C."/>
            <person name="Dubois E."/>
            <person name="Dujon B."/>
            <person name="Duesterhoeft A."/>
            <person name="Erdmann D."/>
            <person name="Esteban M."/>
            <person name="Fabre F."/>
            <person name="Fairhead C."/>
            <person name="Faye G."/>
            <person name="Feldmann H."/>
            <person name="Fiers W."/>
            <person name="Francingues-Gaillard M.-C."/>
            <person name="Franco L."/>
            <person name="Frontali L."/>
            <person name="Fukuhara H."/>
            <person name="Fuller L.J."/>
            <person name="Galland P."/>
            <person name="Gent M.E."/>
            <person name="Gigot D."/>
            <person name="Gilliquet V."/>
            <person name="Glansdorff N."/>
            <person name="Goffeau A."/>
            <person name="Grenson M."/>
            <person name="Grisanti P."/>
            <person name="Grivell L.A."/>
            <person name="de Haan M."/>
            <person name="Haasemann M."/>
            <person name="Hatat D."/>
            <person name="Hoenicka J."/>
            <person name="Hegemann J.H."/>
            <person name="Herbert C.J."/>
            <person name="Hilger F."/>
            <person name="Hohmann S."/>
            <person name="Hollenberg C.P."/>
            <person name="Huse K."/>
            <person name="Iborra F."/>
            <person name="Indge K.J."/>
            <person name="Isono K."/>
            <person name="Jacq C."/>
            <person name="Jacquet M."/>
            <person name="James C.M."/>
            <person name="Jauniaux J.-C."/>
            <person name="Jia Y."/>
            <person name="Jimenez A."/>
            <person name="Kelly A."/>
            <person name="Kleinhans U."/>
            <person name="Kreisl P."/>
            <person name="Lanfranchi G."/>
            <person name="Lewis C."/>
            <person name="van der Linden C.G."/>
            <person name="Lucchini G."/>
            <person name="Lutzenkirchen K."/>
            <person name="Maat M.J."/>
            <person name="Mallet L."/>
            <person name="Mannhaupt G."/>
            <person name="Martegani E."/>
            <person name="Mathieu A."/>
            <person name="Maurer C.T.C."/>
            <person name="McConnell D."/>
            <person name="McKee R.A."/>
            <person name="Messenguy F."/>
            <person name="Mewes H.-W."/>
            <person name="Molemans F."/>
            <person name="Montague M.A."/>
            <person name="Muzi Falconi M."/>
            <person name="Navas L."/>
            <person name="Newlon C.S."/>
            <person name="Noone D."/>
            <person name="Pallier C."/>
            <person name="Panzeri L."/>
            <person name="Pearson B.M."/>
            <person name="Perea J."/>
            <person name="Philippsen P."/>
            <person name="Pierard A."/>
            <person name="Planta R.J."/>
            <person name="Plevani P."/>
            <person name="Poetsch B."/>
            <person name="Pohl F.M."/>
            <person name="Purnelle B."/>
            <person name="Ramezani Rad M."/>
            <person name="Rasmussen S.W."/>
            <person name="Raynal A."/>
            <person name="Remacha M.A."/>
            <person name="Richterich P."/>
            <person name="Roberts A.B."/>
            <person name="Rodriguez F."/>
            <person name="Sanz E."/>
            <person name="Schaaff-Gerstenschlaeger I."/>
            <person name="Scherens B."/>
            <person name="Schweitzer B."/>
            <person name="Shu Y."/>
            <person name="Skala J."/>
            <person name="Slonimski P.P."/>
            <person name="Sor F."/>
            <person name="Soustelle C."/>
            <person name="Spiegelberg R."/>
            <person name="Stateva L.I."/>
            <person name="Steensma H.Y."/>
            <person name="Steiner S."/>
            <person name="Thierry A."/>
            <person name="Thireos G."/>
            <person name="Tzermia M."/>
            <person name="Urrestarazu L.A."/>
            <person name="Valle G."/>
            <person name="Vetter I."/>
            <person name="van Vliet-Reedijk J.C."/>
            <person name="Voet M."/>
            <person name="Volckaert G."/>
            <person name="Vreken P."/>
            <person name="Wang H."/>
            <person name="Warmington J.R."/>
            <person name="von Wettstein D."/>
            <person name="Wicksteed B.L."/>
            <person name="Wilson C."/>
            <person name="Wurst H."/>
            <person name="Xu G."/>
            <person name="Yoshikawa A."/>
            <person name="Zimmermann F.K."/>
            <person name="Sgouros J.G."/>
        </authorList>
    </citation>
    <scope>NUCLEOTIDE SEQUENCE [LARGE SCALE GENOMIC DNA]</scope>
    <source>
        <strain>ATCC 204508 / S288c</strain>
    </source>
</reference>
<reference key="2">
    <citation type="journal article" date="2014" name="G3 (Bethesda)">
        <title>The reference genome sequence of Saccharomyces cerevisiae: Then and now.</title>
        <authorList>
            <person name="Engel S.R."/>
            <person name="Dietrich F.S."/>
            <person name="Fisk D.G."/>
            <person name="Binkley G."/>
            <person name="Balakrishnan R."/>
            <person name="Costanzo M.C."/>
            <person name="Dwight S.S."/>
            <person name="Hitz B.C."/>
            <person name="Karra K."/>
            <person name="Nash R.S."/>
            <person name="Weng S."/>
            <person name="Wong E.D."/>
            <person name="Lloyd P."/>
            <person name="Skrzypek M.S."/>
            <person name="Miyasato S.R."/>
            <person name="Simison M."/>
            <person name="Cherry J.M."/>
        </authorList>
    </citation>
    <scope>GENOME REANNOTATION</scope>
    <source>
        <strain>ATCC 204508 / S288c</strain>
    </source>
</reference>
<reference key="3">
    <citation type="journal article" date="2007" name="Genome Res.">
        <title>Approaching a complete repository of sequence-verified protein-encoding clones for Saccharomyces cerevisiae.</title>
        <authorList>
            <person name="Hu Y."/>
            <person name="Rolfs A."/>
            <person name="Bhullar B."/>
            <person name="Murthy T.V.S."/>
            <person name="Zhu C."/>
            <person name="Berger M.F."/>
            <person name="Camargo A.A."/>
            <person name="Kelley F."/>
            <person name="McCarron S."/>
            <person name="Jepson D."/>
            <person name="Richardson A."/>
            <person name="Raphael J."/>
            <person name="Moreira D."/>
            <person name="Taycher E."/>
            <person name="Zuo D."/>
            <person name="Mohr S."/>
            <person name="Kane M.F."/>
            <person name="Williamson J."/>
            <person name="Simpson A.J.G."/>
            <person name="Bulyk M.L."/>
            <person name="Harlow E."/>
            <person name="Marsischky G."/>
            <person name="Kolodner R.D."/>
            <person name="LaBaer J."/>
        </authorList>
    </citation>
    <scope>NUCLEOTIDE SEQUENCE [GENOMIC DNA]</scope>
    <source>
        <strain>ATCC 204508 / S288c</strain>
    </source>
</reference>
<reference key="4">
    <citation type="journal article" date="2003" name="Nature">
        <title>Global analysis of protein localization in budding yeast.</title>
        <authorList>
            <person name="Huh W.-K."/>
            <person name="Falvo J.V."/>
            <person name="Gerke L.C."/>
            <person name="Carroll A.S."/>
            <person name="Howson R.W."/>
            <person name="Weissman J.S."/>
            <person name="O'Shea E.K."/>
        </authorList>
    </citation>
    <scope>SUBCELLULAR LOCATION [LARGE SCALE ANALYSIS]</scope>
</reference>
<reference key="5">
    <citation type="journal article" date="2003" name="Nature">
        <title>Global analysis of protein expression in yeast.</title>
        <authorList>
            <person name="Ghaemmaghami S."/>
            <person name="Huh W.-K."/>
            <person name="Bower K."/>
            <person name="Howson R.W."/>
            <person name="Belle A."/>
            <person name="Dephoure N."/>
            <person name="O'Shea E.K."/>
            <person name="Weissman J.S."/>
        </authorList>
    </citation>
    <scope>LEVEL OF PROTEIN EXPRESSION [LARGE SCALE ANALYSIS]</scope>
</reference>
<reference key="6">
    <citation type="journal article" date="2005" name="Cell">
        <title>Navigating the chaperone network: an integrative map of physical and genetic interactions mediated by the hsp90 chaperone.</title>
        <authorList>
            <person name="Zhao R."/>
            <person name="Davey M.G."/>
            <person name="Hsu Y.-C."/>
            <person name="Kaplanek P."/>
            <person name="Tong A."/>
            <person name="Parsons A.B."/>
            <person name="Krogan N.J."/>
            <person name="Cagney G."/>
            <person name="Mai D."/>
            <person name="Greenblatt J.F."/>
            <person name="Boone C."/>
            <person name="Emili A."/>
            <person name="Houry W.A."/>
        </authorList>
    </citation>
    <scope>INTERACTION WITH HSP90</scope>
    <scope>IDENTIFICATION IN THE R2PT COMPLEX</scope>
    <scope>IDENTIFICATION BY MASS SPECTROMETRY</scope>
</reference>
<reference key="7">
    <citation type="journal article" date="2012" name="Proc. Natl. Acad. Sci. U.S.A.">
        <title>N-terminal acetylome analyses and functional insights of the N-terminal acetyltransferase NatB.</title>
        <authorList>
            <person name="Van Damme P."/>
            <person name="Lasa M."/>
            <person name="Polevoda B."/>
            <person name="Gazquez C."/>
            <person name="Elosegui-Artola A."/>
            <person name="Kim D.S."/>
            <person name="De Juan-Pardo E."/>
            <person name="Demeyer K."/>
            <person name="Hole K."/>
            <person name="Larrea E."/>
            <person name="Timmerman E."/>
            <person name="Prieto J."/>
            <person name="Arnesen T."/>
            <person name="Sherman F."/>
            <person name="Gevaert K."/>
            <person name="Aldabe R."/>
        </authorList>
    </citation>
    <scope>ACETYLATION [LARGE SCALE ANALYSIS] AT SER-2</scope>
    <scope>CLEAVAGE OF INITIATOR METHIONINE [LARGE SCALE ANALYSIS]</scope>
    <scope>IDENTIFICATION BY MASS SPECTROMETRY [LARGE SCALE ANALYSIS]</scope>
</reference>